<proteinExistence type="inferred from homology"/>
<organism>
    <name type="scientific">Aeromonas salmonicida (strain A449)</name>
    <dbReference type="NCBI Taxonomy" id="382245"/>
    <lineage>
        <taxon>Bacteria</taxon>
        <taxon>Pseudomonadati</taxon>
        <taxon>Pseudomonadota</taxon>
        <taxon>Gammaproteobacteria</taxon>
        <taxon>Aeromonadales</taxon>
        <taxon>Aeromonadaceae</taxon>
        <taxon>Aeromonas</taxon>
    </lineage>
</organism>
<comment type="function">
    <text evidence="1">Cell division inhibitor that blocks the formation of polar Z ring septums. Rapidly oscillates between the poles of the cell to destabilize FtsZ filaments that have formed before they mature into polar Z rings. Prevents FtsZ polymerization.</text>
</comment>
<comment type="subunit">
    <text evidence="1">Interacts with MinD and FtsZ.</text>
</comment>
<comment type="similarity">
    <text evidence="1">Belongs to the MinC family.</text>
</comment>
<keyword id="KW-0131">Cell cycle</keyword>
<keyword id="KW-0132">Cell division</keyword>
<keyword id="KW-0717">Septation</keyword>
<name>MINC_AERS4</name>
<reference key="1">
    <citation type="journal article" date="2008" name="BMC Genomics">
        <title>The genome of Aeromonas salmonicida subsp. salmonicida A449: insights into the evolution of a fish pathogen.</title>
        <authorList>
            <person name="Reith M.E."/>
            <person name="Singh R.K."/>
            <person name="Curtis B."/>
            <person name="Boyd J.M."/>
            <person name="Bouevitch A."/>
            <person name="Kimball J."/>
            <person name="Munholland J."/>
            <person name="Murphy C."/>
            <person name="Sarty D."/>
            <person name="Williams J."/>
            <person name="Nash J.H."/>
            <person name="Johnson S.C."/>
            <person name="Brown L.L."/>
        </authorList>
    </citation>
    <scope>NUCLEOTIDE SEQUENCE [LARGE SCALE GENOMIC DNA]</scope>
    <source>
        <strain>A449</strain>
    </source>
</reference>
<protein>
    <recommendedName>
        <fullName evidence="1">Probable septum site-determining protein MinC</fullName>
    </recommendedName>
</protein>
<gene>
    <name evidence="1" type="primary">minC</name>
    <name type="ordered locus">ASA_2167</name>
</gene>
<dbReference type="EMBL" id="CP000644">
    <property type="protein sequence ID" value="ABO90232.1"/>
    <property type="molecule type" value="Genomic_DNA"/>
</dbReference>
<dbReference type="RefSeq" id="WP_005311268.1">
    <property type="nucleotide sequence ID" value="NC_009348.1"/>
</dbReference>
<dbReference type="SMR" id="A4SMW0"/>
<dbReference type="STRING" id="29491.GCA_000820065_00436"/>
<dbReference type="GeneID" id="79879707"/>
<dbReference type="KEGG" id="asa:ASA_2167"/>
<dbReference type="eggNOG" id="COG0850">
    <property type="taxonomic scope" value="Bacteria"/>
</dbReference>
<dbReference type="HOGENOM" id="CLU_067812_0_1_6"/>
<dbReference type="Proteomes" id="UP000000225">
    <property type="component" value="Chromosome"/>
</dbReference>
<dbReference type="GO" id="GO:0000902">
    <property type="term" value="P:cell morphogenesis"/>
    <property type="evidence" value="ECO:0007669"/>
    <property type="project" value="InterPro"/>
</dbReference>
<dbReference type="GO" id="GO:0000917">
    <property type="term" value="P:division septum assembly"/>
    <property type="evidence" value="ECO:0007669"/>
    <property type="project" value="UniProtKB-KW"/>
</dbReference>
<dbReference type="GO" id="GO:0051302">
    <property type="term" value="P:regulation of cell division"/>
    <property type="evidence" value="ECO:0007669"/>
    <property type="project" value="InterPro"/>
</dbReference>
<dbReference type="GO" id="GO:1901891">
    <property type="term" value="P:regulation of cell septum assembly"/>
    <property type="evidence" value="ECO:0007669"/>
    <property type="project" value="InterPro"/>
</dbReference>
<dbReference type="Gene3D" id="2.160.20.70">
    <property type="match status" value="1"/>
</dbReference>
<dbReference type="Gene3D" id="3.30.70.260">
    <property type="match status" value="1"/>
</dbReference>
<dbReference type="HAMAP" id="MF_00267">
    <property type="entry name" value="MinC"/>
    <property type="match status" value="1"/>
</dbReference>
<dbReference type="InterPro" id="IPR016098">
    <property type="entry name" value="CAP/MinC_C"/>
</dbReference>
<dbReference type="InterPro" id="IPR013033">
    <property type="entry name" value="MinC"/>
</dbReference>
<dbReference type="InterPro" id="IPR036145">
    <property type="entry name" value="MinC_C_sf"/>
</dbReference>
<dbReference type="InterPro" id="IPR007874">
    <property type="entry name" value="MinC_N"/>
</dbReference>
<dbReference type="InterPro" id="IPR005526">
    <property type="entry name" value="Septum_form_inhib_MinC_C"/>
</dbReference>
<dbReference type="NCBIfam" id="TIGR01222">
    <property type="entry name" value="minC"/>
    <property type="match status" value="1"/>
</dbReference>
<dbReference type="PANTHER" id="PTHR34108">
    <property type="entry name" value="SEPTUM SITE-DETERMINING PROTEIN MINC"/>
    <property type="match status" value="1"/>
</dbReference>
<dbReference type="PANTHER" id="PTHR34108:SF1">
    <property type="entry name" value="SEPTUM SITE-DETERMINING PROTEIN MINC"/>
    <property type="match status" value="1"/>
</dbReference>
<dbReference type="Pfam" id="PF03775">
    <property type="entry name" value="MinC_C"/>
    <property type="match status" value="1"/>
</dbReference>
<dbReference type="Pfam" id="PF05209">
    <property type="entry name" value="MinC_N"/>
    <property type="match status" value="1"/>
</dbReference>
<dbReference type="SUPFAM" id="SSF63848">
    <property type="entry name" value="Cell-division inhibitor MinC, C-terminal domain"/>
    <property type="match status" value="1"/>
</dbReference>
<accession>A4SMW0</accession>
<evidence type="ECO:0000255" key="1">
    <source>
        <dbReference type="HAMAP-Rule" id="MF_00267"/>
    </source>
</evidence>
<feature type="chain" id="PRO_1000047798" description="Probable septum site-determining protein MinC">
    <location>
        <begin position="1"/>
        <end position="238"/>
    </location>
</feature>
<sequence>MVERDNELKGTTFTISVLHISDGKPERIRQLLAAKVAQAPQFFNCAPLVINVERLADIPDFDQLKGLVESEDFVLVGITGARDEAMKTAAKAAGLAVMASGKSRKVEPLPLPEPTPSPVAEVKAAPAPLVPSKVHVGPVRSGQQLYAAGTSLVILGSVSQGAEVIADDSIHIYGALRGRAIAGAKGNTQARIYCQQLQAELLSIAGTFQLSDALPAGLIQQPVHVRLDNEQLRIDHIK</sequence>